<organism>
    <name type="scientific">Staphylococcus aureus (strain N315)</name>
    <dbReference type="NCBI Taxonomy" id="158879"/>
    <lineage>
        <taxon>Bacteria</taxon>
        <taxon>Bacillati</taxon>
        <taxon>Bacillota</taxon>
        <taxon>Bacilli</taxon>
        <taxon>Bacillales</taxon>
        <taxon>Staphylococcaceae</taxon>
        <taxon>Staphylococcus</taxon>
    </lineage>
</organism>
<dbReference type="EC" id="2.2.1.1"/>
<dbReference type="EMBL" id="BA000018">
    <property type="protein sequence ID" value="BAB42435.1"/>
    <property type="molecule type" value="Genomic_DNA"/>
</dbReference>
<dbReference type="PIR" id="G89909">
    <property type="entry name" value="G89909"/>
</dbReference>
<dbReference type="RefSeq" id="WP_000481443.1">
    <property type="nucleotide sequence ID" value="NC_002745.2"/>
</dbReference>
<dbReference type="PDB" id="8R3S">
    <property type="method" value="X-ray"/>
    <property type="resolution" value="2.80 A"/>
    <property type="chains" value="A/B/C/D/E/F/G/H/I/J=1-662"/>
</dbReference>
<dbReference type="PDBsum" id="8R3S"/>
<dbReference type="SMR" id="P99161"/>
<dbReference type="EnsemblBacteria" id="BAB42435">
    <property type="protein sequence ID" value="BAB42435"/>
    <property type="gene ID" value="BAB42435"/>
</dbReference>
<dbReference type="KEGG" id="sau:SA1177"/>
<dbReference type="HOGENOM" id="CLU_009227_0_0_9"/>
<dbReference type="UniPathway" id="UPA00115"/>
<dbReference type="UniPathway" id="UPA00116"/>
<dbReference type="GO" id="GO:0005829">
    <property type="term" value="C:cytosol"/>
    <property type="evidence" value="ECO:0007669"/>
    <property type="project" value="TreeGrafter"/>
</dbReference>
<dbReference type="GO" id="GO:0046872">
    <property type="term" value="F:metal ion binding"/>
    <property type="evidence" value="ECO:0007669"/>
    <property type="project" value="UniProtKB-KW"/>
</dbReference>
<dbReference type="GO" id="GO:0004802">
    <property type="term" value="F:transketolase activity"/>
    <property type="evidence" value="ECO:0007669"/>
    <property type="project" value="UniProtKB-EC"/>
</dbReference>
<dbReference type="GO" id="GO:0006310">
    <property type="term" value="P:DNA recombination"/>
    <property type="evidence" value="ECO:0007669"/>
    <property type="project" value="UniProtKB-KW"/>
</dbReference>
<dbReference type="GO" id="GO:0006098">
    <property type="term" value="P:pentose-phosphate shunt"/>
    <property type="evidence" value="ECO:0007669"/>
    <property type="project" value="UniProtKB-UniPathway"/>
</dbReference>
<dbReference type="GO" id="GO:0019253">
    <property type="term" value="P:reductive pentose-phosphate cycle"/>
    <property type="evidence" value="ECO:0007669"/>
    <property type="project" value="UniProtKB-UniPathway"/>
</dbReference>
<dbReference type="CDD" id="cd07033">
    <property type="entry name" value="TPP_PYR_DXS_TK_like"/>
    <property type="match status" value="1"/>
</dbReference>
<dbReference type="CDD" id="cd02012">
    <property type="entry name" value="TPP_TK"/>
    <property type="match status" value="1"/>
</dbReference>
<dbReference type="FunFam" id="3.40.50.920:FF:000003">
    <property type="entry name" value="Transketolase"/>
    <property type="match status" value="1"/>
</dbReference>
<dbReference type="FunFam" id="3.40.50.970:FF:000003">
    <property type="entry name" value="Transketolase"/>
    <property type="match status" value="1"/>
</dbReference>
<dbReference type="FunFam" id="3.40.50.970:FF:000081">
    <property type="entry name" value="Transketolase"/>
    <property type="match status" value="1"/>
</dbReference>
<dbReference type="Gene3D" id="3.40.50.920">
    <property type="match status" value="1"/>
</dbReference>
<dbReference type="Gene3D" id="3.40.50.970">
    <property type="match status" value="2"/>
</dbReference>
<dbReference type="InterPro" id="IPR029061">
    <property type="entry name" value="THDP-binding"/>
</dbReference>
<dbReference type="InterPro" id="IPR009014">
    <property type="entry name" value="Transketo_C/PFOR_II"/>
</dbReference>
<dbReference type="InterPro" id="IPR055152">
    <property type="entry name" value="Transketolase-like_C_2"/>
</dbReference>
<dbReference type="InterPro" id="IPR005475">
    <property type="entry name" value="Transketolase-like_Pyr-bd"/>
</dbReference>
<dbReference type="InterPro" id="IPR005478">
    <property type="entry name" value="Transketolase_bac-like"/>
</dbReference>
<dbReference type="InterPro" id="IPR020826">
    <property type="entry name" value="Transketolase_BS"/>
</dbReference>
<dbReference type="InterPro" id="IPR049557">
    <property type="entry name" value="Transketolase_CS"/>
</dbReference>
<dbReference type="InterPro" id="IPR033247">
    <property type="entry name" value="Transketolase_fam"/>
</dbReference>
<dbReference type="InterPro" id="IPR005474">
    <property type="entry name" value="Transketolase_N"/>
</dbReference>
<dbReference type="NCBIfam" id="TIGR00232">
    <property type="entry name" value="tktlase_bact"/>
    <property type="match status" value="1"/>
</dbReference>
<dbReference type="PANTHER" id="PTHR43522">
    <property type="entry name" value="TRANSKETOLASE"/>
    <property type="match status" value="1"/>
</dbReference>
<dbReference type="PANTHER" id="PTHR43522:SF2">
    <property type="entry name" value="TRANSKETOLASE 1-RELATED"/>
    <property type="match status" value="1"/>
</dbReference>
<dbReference type="Pfam" id="PF02779">
    <property type="entry name" value="Transket_pyr"/>
    <property type="match status" value="1"/>
</dbReference>
<dbReference type="Pfam" id="PF22613">
    <property type="entry name" value="Transketolase_C_1"/>
    <property type="match status" value="1"/>
</dbReference>
<dbReference type="Pfam" id="PF00456">
    <property type="entry name" value="Transketolase_N"/>
    <property type="match status" value="1"/>
</dbReference>
<dbReference type="SMART" id="SM00861">
    <property type="entry name" value="Transket_pyr"/>
    <property type="match status" value="1"/>
</dbReference>
<dbReference type="SUPFAM" id="SSF52518">
    <property type="entry name" value="Thiamin diphosphate-binding fold (THDP-binding)"/>
    <property type="match status" value="2"/>
</dbReference>
<dbReference type="SUPFAM" id="SSF52922">
    <property type="entry name" value="TK C-terminal domain-like"/>
    <property type="match status" value="1"/>
</dbReference>
<dbReference type="PROSITE" id="PS00801">
    <property type="entry name" value="TRANSKETOLASE_1"/>
    <property type="match status" value="1"/>
</dbReference>
<dbReference type="PROSITE" id="PS00802">
    <property type="entry name" value="TRANSKETOLASE_2"/>
    <property type="match status" value="1"/>
</dbReference>
<protein>
    <recommendedName>
        <fullName>Transketolase</fullName>
        <shortName>TK</shortName>
        <ecNumber>2.2.1.1</ecNumber>
    </recommendedName>
</protein>
<evidence type="ECO:0000250" key="1"/>
<evidence type="ECO:0000305" key="2"/>
<evidence type="ECO:0007829" key="3">
    <source>
        <dbReference type="PDB" id="8R3S"/>
    </source>
</evidence>
<reference key="1">
    <citation type="journal article" date="2001" name="Lancet">
        <title>Whole genome sequencing of meticillin-resistant Staphylococcus aureus.</title>
        <authorList>
            <person name="Kuroda M."/>
            <person name="Ohta T."/>
            <person name="Uchiyama I."/>
            <person name="Baba T."/>
            <person name="Yuzawa H."/>
            <person name="Kobayashi I."/>
            <person name="Cui L."/>
            <person name="Oguchi A."/>
            <person name="Aoki K."/>
            <person name="Nagai Y."/>
            <person name="Lian J.-Q."/>
            <person name="Ito T."/>
            <person name="Kanamori M."/>
            <person name="Matsumaru H."/>
            <person name="Maruyama A."/>
            <person name="Murakami H."/>
            <person name="Hosoyama A."/>
            <person name="Mizutani-Ui Y."/>
            <person name="Takahashi N.K."/>
            <person name="Sawano T."/>
            <person name="Inoue R."/>
            <person name="Kaito C."/>
            <person name="Sekimizu K."/>
            <person name="Hirakawa H."/>
            <person name="Kuhara S."/>
            <person name="Goto S."/>
            <person name="Yabuzaki J."/>
            <person name="Kanehisa M."/>
            <person name="Yamashita A."/>
            <person name="Oshima K."/>
            <person name="Furuya K."/>
            <person name="Yoshino C."/>
            <person name="Shiba T."/>
            <person name="Hattori M."/>
            <person name="Ogasawara N."/>
            <person name="Hayashi H."/>
            <person name="Hiramatsu K."/>
        </authorList>
    </citation>
    <scope>NUCLEOTIDE SEQUENCE [LARGE SCALE GENOMIC DNA]</scope>
    <source>
        <strain>N315</strain>
    </source>
</reference>
<reference key="2">
    <citation type="journal article" date="2005" name="J. Microbiol. Methods">
        <title>Correlation of proteomic and transcriptomic profiles of Staphylococcus aureus during the post-exponential phase of growth.</title>
        <authorList>
            <person name="Scherl A."/>
            <person name="Francois P."/>
            <person name="Bento M."/>
            <person name="Deshusses J.M."/>
            <person name="Charbonnier Y."/>
            <person name="Converset V."/>
            <person name="Huyghe A."/>
            <person name="Walter N."/>
            <person name="Hoogland C."/>
            <person name="Appel R.D."/>
            <person name="Sanchez J.-C."/>
            <person name="Zimmermann-Ivol C.G."/>
            <person name="Corthals G.L."/>
            <person name="Hochstrasser D.F."/>
            <person name="Schrenzel J."/>
        </authorList>
    </citation>
    <scope>IDENTIFICATION BY MASS SPECTROMETRY</scope>
    <source>
        <strain>N315</strain>
    </source>
</reference>
<reference key="3">
    <citation type="submission" date="2007-10" db="UniProtKB">
        <title>Shotgun proteomic analysis of total and membrane protein extracts of S. aureus strain N315.</title>
        <authorList>
            <person name="Vaezzadeh A.R."/>
            <person name="Deshusses J."/>
            <person name="Lescuyer P."/>
            <person name="Hochstrasser D.F."/>
        </authorList>
    </citation>
    <scope>IDENTIFICATION BY MASS SPECTROMETRY [LARGE SCALE ANALYSIS]</scope>
    <source>
        <strain>N315</strain>
    </source>
</reference>
<keyword id="KW-0002">3D-structure</keyword>
<keyword id="KW-0106">Calcium</keyword>
<keyword id="KW-0233">DNA recombination</keyword>
<keyword id="KW-0460">Magnesium</keyword>
<keyword id="KW-0479">Metal-binding</keyword>
<keyword id="KW-0786">Thiamine pyrophosphate</keyword>
<keyword id="KW-0808">Transferase</keyword>
<sequence>MFNEKDQLAVDTLRALSIDTIEKANSGHPGLPMGAAPMAYTLWTRHLNFNPQSKDYFNRDRFVLSAGHGSALLYSLLHVSGSLELEELKQFRQWGSKTPGHPEYRHTDGVEVTTGPLGQGFAMSVGLALAEDHLAGKFNKEGYNVVDHYTYVLASDGDLMEGISHEAASFAGHNKLSKLVVLYDSNDISLDGELNKAFSENTKARFEAYGWNYLLVKDGNDLEEIDKAITTAKSQEGPTIIEVKTTIGFGSPNKAGTNGVHGAPLGEVERKLTFENYGLDPEKRFNVSEEVYEIFQNTMLKRANEDESQWNSLLEKYAETYPELAEEFKLAISGKLPKNYKDELPRFELGHNGASRADSGTVIQAISKTVPSFFGGSADLAGSNKSNVNDATDYSSETPEGKNVWFGVREFAMGAAVNGMAAHGGLHPYGATFFVFSDYLKPALRLSSIMGLNATFIFTHDSIAVGEDGPTHEPIEQLAGLRAIPNMNVIRPADGNETRVAWEVALESESTPTSLVLTRQNLPVLDVPEDVVEEGVRKGAYTVYGSEETPEFLLLASGSEVSLAVEAAKDLEKQGKSVRVVSMPNWNAFEQQSEEYKESVIPSSVTKRVAIEMASPLGWHKYVGTAGKVIAIDGFGASAPGDLVVEKYGFTKENILNQVMSL</sequence>
<comment type="function">
    <text evidence="1">Catalyzes the transfer of a two-carbon ketol group from a ketose donor to an aldose acceptor, via a covalent intermediate with the cofactor thiamine pyrophosphate.</text>
</comment>
<comment type="catalytic activity">
    <reaction>
        <text>D-sedoheptulose 7-phosphate + D-glyceraldehyde 3-phosphate = aldehydo-D-ribose 5-phosphate + D-xylulose 5-phosphate</text>
        <dbReference type="Rhea" id="RHEA:10508"/>
        <dbReference type="ChEBI" id="CHEBI:57483"/>
        <dbReference type="ChEBI" id="CHEBI:57737"/>
        <dbReference type="ChEBI" id="CHEBI:58273"/>
        <dbReference type="ChEBI" id="CHEBI:59776"/>
        <dbReference type="EC" id="2.2.1.1"/>
    </reaction>
</comment>
<comment type="cofactor">
    <cofactor evidence="1">
        <name>Mg(2+)</name>
        <dbReference type="ChEBI" id="CHEBI:18420"/>
    </cofactor>
    <cofactor evidence="1">
        <name>Ca(2+)</name>
        <dbReference type="ChEBI" id="CHEBI:29108"/>
    </cofactor>
    <cofactor evidence="1">
        <name>Mn(2+)</name>
        <dbReference type="ChEBI" id="CHEBI:29035"/>
    </cofactor>
    <cofactor evidence="1">
        <name>Co(2+)</name>
        <dbReference type="ChEBI" id="CHEBI:48828"/>
    </cofactor>
    <text evidence="1">Binds 1 Mg(2+) ion per subunit. Can also utilize other divalent metal cations, such as Ca(2+), Mn(2+) and Co(2+).</text>
</comment>
<comment type="cofactor">
    <cofactor evidence="1">
        <name>thiamine diphosphate</name>
        <dbReference type="ChEBI" id="CHEBI:58937"/>
    </cofactor>
    <text evidence="1">Binds 1 thiamine pyrophosphate per subunit.</text>
</comment>
<comment type="pathway">
    <text>Carbohydrate biosynthesis; Calvin cycle.</text>
</comment>
<comment type="pathway">
    <text>Carbohydrate degradation; pentose phosphate pathway.</text>
</comment>
<comment type="subunit">
    <text evidence="1">Homodimer.</text>
</comment>
<comment type="similarity">
    <text evidence="2">Belongs to the transketolase family.</text>
</comment>
<accession>P99161</accession>
<accession>Q99UD4</accession>
<name>TKT_STAAN</name>
<feature type="chain" id="PRO_0000191872" description="Transketolase">
    <location>
        <begin position="1"/>
        <end position="662"/>
    </location>
</feature>
<feature type="active site" description="Proton donor" evidence="1">
    <location>
        <position position="410"/>
    </location>
</feature>
<feature type="binding site" evidence="1">
    <location>
        <position position="28"/>
    </location>
    <ligand>
        <name>substrate</name>
    </ligand>
</feature>
<feature type="binding site" evidence="1">
    <location>
        <position position="68"/>
    </location>
    <ligand>
        <name>thiamine diphosphate</name>
        <dbReference type="ChEBI" id="CHEBI:58937"/>
    </ligand>
</feature>
<feature type="binding site" evidence="1">
    <location>
        <begin position="115"/>
        <end position="117"/>
    </location>
    <ligand>
        <name>thiamine diphosphate</name>
        <dbReference type="ChEBI" id="CHEBI:58937"/>
    </ligand>
</feature>
<feature type="binding site" evidence="1">
    <location>
        <position position="156"/>
    </location>
    <ligand>
        <name>Mg(2+)</name>
        <dbReference type="ChEBI" id="CHEBI:18420"/>
    </ligand>
</feature>
<feature type="binding site" evidence="1">
    <location>
        <position position="157"/>
    </location>
    <ligand>
        <name>thiamine diphosphate</name>
        <dbReference type="ChEBI" id="CHEBI:58937"/>
    </ligand>
</feature>
<feature type="binding site" evidence="1">
    <location>
        <position position="186"/>
    </location>
    <ligand>
        <name>Mg(2+)</name>
        <dbReference type="ChEBI" id="CHEBI:18420"/>
    </ligand>
</feature>
<feature type="binding site" evidence="1">
    <location>
        <position position="186"/>
    </location>
    <ligand>
        <name>thiamine diphosphate</name>
        <dbReference type="ChEBI" id="CHEBI:58937"/>
    </ligand>
</feature>
<feature type="binding site" evidence="1">
    <location>
        <position position="188"/>
    </location>
    <ligand>
        <name>Mg(2+)</name>
        <dbReference type="ChEBI" id="CHEBI:18420"/>
    </ligand>
</feature>
<feature type="binding site" evidence="1">
    <location>
        <position position="261"/>
    </location>
    <ligand>
        <name>substrate</name>
    </ligand>
</feature>
<feature type="binding site" evidence="1">
    <location>
        <position position="261"/>
    </location>
    <ligand>
        <name>thiamine diphosphate</name>
        <dbReference type="ChEBI" id="CHEBI:58937"/>
    </ligand>
</feature>
<feature type="binding site" evidence="1">
    <location>
        <position position="356"/>
    </location>
    <ligand>
        <name>substrate</name>
    </ligand>
</feature>
<feature type="binding site" evidence="1">
    <location>
        <position position="383"/>
    </location>
    <ligand>
        <name>substrate</name>
    </ligand>
</feature>
<feature type="binding site" evidence="1">
    <location>
        <position position="436"/>
    </location>
    <ligand>
        <name>thiamine diphosphate</name>
        <dbReference type="ChEBI" id="CHEBI:58937"/>
    </ligand>
</feature>
<feature type="binding site" evidence="1">
    <location>
        <position position="460"/>
    </location>
    <ligand>
        <name>substrate</name>
    </ligand>
</feature>
<feature type="binding site" evidence="1">
    <location>
        <position position="468"/>
    </location>
    <ligand>
        <name>substrate</name>
    </ligand>
</feature>
<feature type="binding site" evidence="1">
    <location>
        <position position="519"/>
    </location>
    <ligand>
        <name>substrate</name>
    </ligand>
</feature>
<feature type="site" description="Important for catalytic activity" evidence="1">
    <location>
        <position position="28"/>
    </location>
</feature>
<feature type="site" description="Important for catalytic activity" evidence="1">
    <location>
        <position position="261"/>
    </location>
</feature>
<feature type="helix" evidence="3">
    <location>
        <begin position="4"/>
        <end position="24"/>
    </location>
</feature>
<feature type="helix" evidence="3">
    <location>
        <begin position="30"/>
        <end position="45"/>
    </location>
</feature>
<feature type="strand" evidence="3">
    <location>
        <begin position="51"/>
        <end position="53"/>
    </location>
</feature>
<feature type="strand" evidence="3">
    <location>
        <begin position="61"/>
        <end position="65"/>
    </location>
</feature>
<feature type="helix" evidence="3">
    <location>
        <begin position="67"/>
        <end position="69"/>
    </location>
</feature>
<feature type="helix" evidence="3">
    <location>
        <begin position="70"/>
        <end position="79"/>
    </location>
</feature>
<feature type="helix" evidence="3">
    <location>
        <begin position="85"/>
        <end position="89"/>
    </location>
</feature>
<feature type="turn" evidence="3">
    <location>
        <begin position="90"/>
        <end position="92"/>
    </location>
</feature>
<feature type="turn" evidence="3">
    <location>
        <begin position="104"/>
        <end position="106"/>
    </location>
</feature>
<feature type="helix" evidence="3">
    <location>
        <begin position="119"/>
        <end position="138"/>
    </location>
</feature>
<feature type="strand" evidence="3">
    <location>
        <begin position="150"/>
        <end position="154"/>
    </location>
</feature>
<feature type="helix" evidence="3">
    <location>
        <begin position="156"/>
        <end position="159"/>
    </location>
</feature>
<feature type="helix" evidence="3">
    <location>
        <begin position="162"/>
        <end position="173"/>
    </location>
</feature>
<feature type="strand" evidence="3">
    <location>
        <begin position="179"/>
        <end position="185"/>
    </location>
</feature>
<feature type="strand" evidence="3">
    <location>
        <begin position="190"/>
        <end position="193"/>
    </location>
</feature>
<feature type="helix" evidence="3">
    <location>
        <begin position="194"/>
        <end position="196"/>
    </location>
</feature>
<feature type="helix" evidence="3">
    <location>
        <begin position="202"/>
        <end position="208"/>
    </location>
</feature>
<feature type="strand" evidence="3">
    <location>
        <begin position="212"/>
        <end position="217"/>
    </location>
</feature>
<feature type="helix" evidence="3">
    <location>
        <begin position="222"/>
        <end position="233"/>
    </location>
</feature>
<feature type="strand" evidence="3">
    <location>
        <begin position="239"/>
        <end position="244"/>
    </location>
</feature>
<feature type="turn" evidence="3">
    <location>
        <begin position="247"/>
        <end position="250"/>
    </location>
</feature>
<feature type="turn" evidence="3">
    <location>
        <begin position="252"/>
        <end position="256"/>
    </location>
</feature>
<feature type="helix" evidence="3">
    <location>
        <begin position="259"/>
        <end position="262"/>
    </location>
</feature>
<feature type="helix" evidence="3">
    <location>
        <begin position="267"/>
        <end position="277"/>
    </location>
</feature>
<feature type="helix" evidence="3">
    <location>
        <begin position="289"/>
        <end position="297"/>
    </location>
</feature>
<feature type="helix" evidence="3">
    <location>
        <begin position="299"/>
        <end position="320"/>
    </location>
</feature>
<feature type="helix" evidence="3">
    <location>
        <begin position="322"/>
        <end position="333"/>
    </location>
</feature>
<feature type="helix" evidence="3">
    <location>
        <begin position="340"/>
        <end position="343"/>
    </location>
</feature>
<feature type="helix" evidence="3">
    <location>
        <begin position="355"/>
        <end position="369"/>
    </location>
</feature>
<feature type="strand" evidence="3">
    <location>
        <begin position="373"/>
        <end position="379"/>
    </location>
</feature>
<feature type="helix" evidence="3">
    <location>
        <begin position="381"/>
        <end position="384"/>
    </location>
</feature>
<feature type="strand" evidence="3">
    <location>
        <begin position="403"/>
        <end position="405"/>
    </location>
</feature>
<feature type="helix" evidence="3">
    <location>
        <begin position="410"/>
        <end position="423"/>
    </location>
</feature>
<feature type="strand" evidence="3">
    <location>
        <begin position="427"/>
        <end position="433"/>
    </location>
</feature>
<feature type="helix" evidence="3">
    <location>
        <begin position="434"/>
        <end position="440"/>
    </location>
</feature>
<feature type="helix" evidence="3">
    <location>
        <begin position="441"/>
        <end position="450"/>
    </location>
</feature>
<feature type="strand" evidence="3">
    <location>
        <begin position="455"/>
        <end position="459"/>
    </location>
</feature>
<feature type="helix" evidence="3">
    <location>
        <begin position="463"/>
        <end position="465"/>
    </location>
</feature>
<feature type="helix" evidence="3">
    <location>
        <begin position="470"/>
        <end position="472"/>
    </location>
</feature>
<feature type="helix" evidence="3">
    <location>
        <begin position="477"/>
        <end position="483"/>
    </location>
</feature>
<feature type="strand" evidence="3">
    <location>
        <begin position="488"/>
        <end position="490"/>
    </location>
</feature>
<feature type="helix" evidence="3">
    <location>
        <begin position="495"/>
        <end position="507"/>
    </location>
</feature>
<feature type="strand" evidence="3">
    <location>
        <begin position="509"/>
        <end position="511"/>
    </location>
</feature>
<feature type="strand" evidence="3">
    <location>
        <begin position="513"/>
        <end position="516"/>
    </location>
</feature>
<feature type="helix" evidence="3">
    <location>
        <begin position="529"/>
        <end position="537"/>
    </location>
</feature>
<feature type="strand" evidence="3">
    <location>
        <begin position="541"/>
        <end position="544"/>
    </location>
</feature>
<feature type="strand" evidence="3">
    <location>
        <begin position="551"/>
        <end position="556"/>
    </location>
</feature>
<feature type="helix" evidence="3">
    <location>
        <begin position="560"/>
        <end position="573"/>
    </location>
</feature>
<feature type="strand" evidence="3">
    <location>
        <begin position="578"/>
        <end position="582"/>
    </location>
</feature>
<feature type="helix" evidence="3">
    <location>
        <begin position="586"/>
        <end position="590"/>
    </location>
</feature>
<feature type="helix" evidence="3">
    <location>
        <begin position="594"/>
        <end position="600"/>
    </location>
</feature>
<feature type="strand" evidence="3">
    <location>
        <begin position="608"/>
        <end position="611"/>
    </location>
</feature>
<feature type="helix" evidence="3">
    <location>
        <begin position="620"/>
        <end position="623"/>
    </location>
</feature>
<feature type="strand" evidence="3">
    <location>
        <begin position="628"/>
        <end position="630"/>
    </location>
</feature>
<feature type="helix" evidence="3">
    <location>
        <begin position="641"/>
        <end position="647"/>
    </location>
</feature>
<feature type="helix" evidence="3">
    <location>
        <begin position="652"/>
        <end position="661"/>
    </location>
</feature>
<proteinExistence type="evidence at protein level"/>
<gene>
    <name type="primary">tkt</name>
    <name type="ordered locus">SA1177</name>
</gene>